<feature type="chain" id="PRO_0000368500" description="ATP synthase subunit b">
    <location>
        <begin position="1"/>
        <end position="177"/>
    </location>
</feature>
<feature type="transmembrane region" description="Helical" evidence="1">
    <location>
        <begin position="15"/>
        <end position="35"/>
    </location>
</feature>
<organism>
    <name type="scientific">Geobacillus kaustophilus (strain HTA426)</name>
    <dbReference type="NCBI Taxonomy" id="235909"/>
    <lineage>
        <taxon>Bacteria</taxon>
        <taxon>Bacillati</taxon>
        <taxon>Bacillota</taxon>
        <taxon>Bacilli</taxon>
        <taxon>Bacillales</taxon>
        <taxon>Anoxybacillaceae</taxon>
        <taxon>Geobacillus</taxon>
        <taxon>Geobacillus thermoleovorans group</taxon>
    </lineage>
</organism>
<accession>Q5KUI9</accession>
<evidence type="ECO:0000255" key="1">
    <source>
        <dbReference type="HAMAP-Rule" id="MF_01398"/>
    </source>
</evidence>
<sequence>MWKANVWVLGEAAHGISGGTIIYQLLMFIILLALLRKFAWQPLMNIMKQREEHIANEIDQAEKRRQEAEKLLEEQRELMKQSRQEAQALIENARKLAEEQKEQIVASARAEAERVKEVAKKEIEREKEQAMAALREQVASLSVLIASKVIEKELTEQDQRKLIEAYIKDVQEAGGAR</sequence>
<comment type="function">
    <text evidence="1">F(1)F(0) ATP synthase produces ATP from ADP in the presence of a proton or sodium gradient. F-type ATPases consist of two structural domains, F(1) containing the extramembraneous catalytic core and F(0) containing the membrane proton channel, linked together by a central stalk and a peripheral stalk. During catalysis, ATP synthesis in the catalytic domain of F(1) is coupled via a rotary mechanism of the central stalk subunits to proton translocation.</text>
</comment>
<comment type="function">
    <text evidence="1">Component of the F(0) channel, it forms part of the peripheral stalk, linking F(1) to F(0).</text>
</comment>
<comment type="subunit">
    <text evidence="1">F-type ATPases have 2 components, F(1) - the catalytic core - and F(0) - the membrane proton channel. F(1) has five subunits: alpha(3), beta(3), gamma(1), delta(1), epsilon(1). F(0) has three main subunits: a(1), b(2) and c(10-14). The alpha and beta chains form an alternating ring which encloses part of the gamma chain. F(1) is attached to F(0) by a central stalk formed by the gamma and epsilon chains, while a peripheral stalk is formed by the delta and b chains.</text>
</comment>
<comment type="subcellular location">
    <subcellularLocation>
        <location evidence="1">Cell membrane</location>
        <topology evidence="1">Single-pass membrane protein</topology>
    </subcellularLocation>
</comment>
<comment type="similarity">
    <text evidence="1">Belongs to the ATPase B chain family.</text>
</comment>
<proteinExistence type="inferred from homology"/>
<name>ATPF_GEOKA</name>
<keyword id="KW-0066">ATP synthesis</keyword>
<keyword id="KW-1003">Cell membrane</keyword>
<keyword id="KW-0138">CF(0)</keyword>
<keyword id="KW-0375">Hydrogen ion transport</keyword>
<keyword id="KW-0406">Ion transport</keyword>
<keyword id="KW-0472">Membrane</keyword>
<keyword id="KW-1185">Reference proteome</keyword>
<keyword id="KW-0812">Transmembrane</keyword>
<keyword id="KW-1133">Transmembrane helix</keyword>
<keyword id="KW-0813">Transport</keyword>
<reference key="1">
    <citation type="journal article" date="2004" name="Nucleic Acids Res.">
        <title>Thermoadaptation trait revealed by the genome sequence of thermophilic Geobacillus kaustophilus.</title>
        <authorList>
            <person name="Takami H."/>
            <person name="Takaki Y."/>
            <person name="Chee G.-J."/>
            <person name="Nishi S."/>
            <person name="Shimamura S."/>
            <person name="Suzuki H."/>
            <person name="Matsui S."/>
            <person name="Uchiyama I."/>
        </authorList>
    </citation>
    <scope>NUCLEOTIDE SEQUENCE [LARGE SCALE GENOMIC DNA]</scope>
    <source>
        <strain>HTA426</strain>
    </source>
</reference>
<gene>
    <name evidence="1" type="primary">atpF</name>
    <name type="ordered locus">GK3362</name>
</gene>
<dbReference type="EMBL" id="BA000043">
    <property type="protein sequence ID" value="BAD77647.1"/>
    <property type="molecule type" value="Genomic_DNA"/>
</dbReference>
<dbReference type="SMR" id="Q5KUI9"/>
<dbReference type="STRING" id="235909.GK3362"/>
<dbReference type="KEGG" id="gka:GK3362"/>
<dbReference type="eggNOG" id="COG0711">
    <property type="taxonomic scope" value="Bacteria"/>
</dbReference>
<dbReference type="HOGENOM" id="CLU_079215_4_2_9"/>
<dbReference type="Proteomes" id="UP000001172">
    <property type="component" value="Chromosome"/>
</dbReference>
<dbReference type="GO" id="GO:0005886">
    <property type="term" value="C:plasma membrane"/>
    <property type="evidence" value="ECO:0007669"/>
    <property type="project" value="UniProtKB-SubCell"/>
</dbReference>
<dbReference type="GO" id="GO:0045259">
    <property type="term" value="C:proton-transporting ATP synthase complex"/>
    <property type="evidence" value="ECO:0007669"/>
    <property type="project" value="UniProtKB-KW"/>
</dbReference>
<dbReference type="GO" id="GO:0046933">
    <property type="term" value="F:proton-transporting ATP synthase activity, rotational mechanism"/>
    <property type="evidence" value="ECO:0007669"/>
    <property type="project" value="UniProtKB-UniRule"/>
</dbReference>
<dbReference type="GO" id="GO:0046961">
    <property type="term" value="F:proton-transporting ATPase activity, rotational mechanism"/>
    <property type="evidence" value="ECO:0007669"/>
    <property type="project" value="TreeGrafter"/>
</dbReference>
<dbReference type="CDD" id="cd06503">
    <property type="entry name" value="ATP-synt_Fo_b"/>
    <property type="match status" value="1"/>
</dbReference>
<dbReference type="Gene3D" id="1.20.5.620">
    <property type="entry name" value="F1F0 ATP synthase subunit B, membrane domain"/>
    <property type="match status" value="1"/>
</dbReference>
<dbReference type="HAMAP" id="MF_01398">
    <property type="entry name" value="ATP_synth_b_bprime"/>
    <property type="match status" value="1"/>
</dbReference>
<dbReference type="InterPro" id="IPR028987">
    <property type="entry name" value="ATP_synth_B-like_membr_sf"/>
</dbReference>
<dbReference type="InterPro" id="IPR002146">
    <property type="entry name" value="ATP_synth_b/b'su_bac/chlpt"/>
</dbReference>
<dbReference type="InterPro" id="IPR005864">
    <property type="entry name" value="ATP_synth_F0_bsu_bac"/>
</dbReference>
<dbReference type="InterPro" id="IPR050059">
    <property type="entry name" value="ATP_synthase_B_chain"/>
</dbReference>
<dbReference type="NCBIfam" id="TIGR01144">
    <property type="entry name" value="ATP_synt_b"/>
    <property type="match status" value="1"/>
</dbReference>
<dbReference type="NCBIfam" id="NF009987">
    <property type="entry name" value="PRK13453.1"/>
    <property type="match status" value="1"/>
</dbReference>
<dbReference type="PANTHER" id="PTHR33445:SF1">
    <property type="entry name" value="ATP SYNTHASE SUBUNIT B"/>
    <property type="match status" value="1"/>
</dbReference>
<dbReference type="PANTHER" id="PTHR33445">
    <property type="entry name" value="ATP SYNTHASE SUBUNIT B', CHLOROPLASTIC"/>
    <property type="match status" value="1"/>
</dbReference>
<dbReference type="Pfam" id="PF00430">
    <property type="entry name" value="ATP-synt_B"/>
    <property type="match status" value="1"/>
</dbReference>
<dbReference type="SUPFAM" id="SSF81573">
    <property type="entry name" value="F1F0 ATP synthase subunit B, membrane domain"/>
    <property type="match status" value="1"/>
</dbReference>
<protein>
    <recommendedName>
        <fullName evidence="1">ATP synthase subunit b</fullName>
    </recommendedName>
    <alternativeName>
        <fullName evidence="1">ATP synthase F(0) sector subunit b</fullName>
    </alternativeName>
    <alternativeName>
        <fullName evidence="1">ATPase subunit I</fullName>
    </alternativeName>
    <alternativeName>
        <fullName evidence="1">F-type ATPase subunit b</fullName>
        <shortName evidence="1">F-ATPase subunit b</shortName>
    </alternativeName>
</protein>